<accession>P14000</accession>
<name>ARS_HEMPU</name>
<evidence type="ECO:0000250" key="1"/>
<evidence type="ECO:0000250" key="2">
    <source>
        <dbReference type="UniProtKB" id="P15289"/>
    </source>
</evidence>
<evidence type="ECO:0000255" key="3"/>
<evidence type="ECO:0000305" key="4"/>
<protein>
    <recommendedName>
        <fullName>Arylsulfatase</fullName>
        <shortName>AS</shortName>
        <ecNumber>3.1.6.1</ecNumber>
    </recommendedName>
    <alternativeName>
        <fullName>Aryl-sulfate sulphohydrolase</fullName>
        <shortName>ARS</shortName>
    </alternativeName>
</protein>
<organism>
    <name type="scientific">Hemicentrotus pulcherrimus</name>
    <name type="common">Sea urchin</name>
    <name type="synonym">Strongylocentrotus pulcherrimus</name>
    <dbReference type="NCBI Taxonomy" id="7650"/>
    <lineage>
        <taxon>Eukaryota</taxon>
        <taxon>Metazoa</taxon>
        <taxon>Echinodermata</taxon>
        <taxon>Eleutherozoa</taxon>
        <taxon>Echinozoa</taxon>
        <taxon>Echinoidea</taxon>
        <taxon>Euechinoidea</taxon>
        <taxon>Echinacea</taxon>
        <taxon>Camarodonta</taxon>
        <taxon>Echinidea</taxon>
        <taxon>Strongylocentrotidae</taxon>
        <taxon>Hemicentrotus</taxon>
    </lineage>
</organism>
<dbReference type="EC" id="3.1.6.1"/>
<dbReference type="EMBL" id="X17015">
    <property type="protein sequence ID" value="CAA34881.1"/>
    <property type="molecule type" value="mRNA"/>
</dbReference>
<dbReference type="PIR" id="S01793">
    <property type="entry name" value="S01793"/>
</dbReference>
<dbReference type="PIR" id="S07089">
    <property type="entry name" value="S07089"/>
</dbReference>
<dbReference type="SMR" id="P14000"/>
<dbReference type="GO" id="GO:0005737">
    <property type="term" value="C:cytoplasm"/>
    <property type="evidence" value="ECO:0007669"/>
    <property type="project" value="UniProtKB-SubCell"/>
</dbReference>
<dbReference type="GO" id="GO:0005576">
    <property type="term" value="C:extracellular region"/>
    <property type="evidence" value="ECO:0007669"/>
    <property type="project" value="UniProtKB-KW"/>
</dbReference>
<dbReference type="GO" id="GO:0004065">
    <property type="term" value="F:arylsulfatase activity"/>
    <property type="evidence" value="ECO:0007669"/>
    <property type="project" value="UniProtKB-EC"/>
</dbReference>
<dbReference type="GO" id="GO:0046872">
    <property type="term" value="F:metal ion binding"/>
    <property type="evidence" value="ECO:0007669"/>
    <property type="project" value="UniProtKB-KW"/>
</dbReference>
<dbReference type="FunFam" id="3.30.1120.10:FF:000019">
    <property type="entry name" value="Arylsulfatase"/>
    <property type="match status" value="1"/>
</dbReference>
<dbReference type="FunFam" id="3.40.720.10:FF:000023">
    <property type="entry name" value="Arylsulfatase A"/>
    <property type="match status" value="1"/>
</dbReference>
<dbReference type="Gene3D" id="3.30.1120.10">
    <property type="match status" value="1"/>
</dbReference>
<dbReference type="Gene3D" id="3.40.720.10">
    <property type="entry name" value="Alkaline Phosphatase, subunit A"/>
    <property type="match status" value="1"/>
</dbReference>
<dbReference type="InterPro" id="IPR017850">
    <property type="entry name" value="Alkaline_phosphatase_core_sf"/>
</dbReference>
<dbReference type="InterPro" id="IPR050738">
    <property type="entry name" value="Sulfatase"/>
</dbReference>
<dbReference type="InterPro" id="IPR024607">
    <property type="entry name" value="Sulfatase_CS"/>
</dbReference>
<dbReference type="InterPro" id="IPR000917">
    <property type="entry name" value="Sulfatase_N"/>
</dbReference>
<dbReference type="PANTHER" id="PTHR42693:SF15">
    <property type="entry name" value="ARYLSULFATASE"/>
    <property type="match status" value="1"/>
</dbReference>
<dbReference type="PANTHER" id="PTHR42693">
    <property type="entry name" value="ARYLSULFATASE FAMILY MEMBER"/>
    <property type="match status" value="1"/>
</dbReference>
<dbReference type="Pfam" id="PF00884">
    <property type="entry name" value="Sulfatase"/>
    <property type="match status" value="1"/>
</dbReference>
<dbReference type="Pfam" id="PF14707">
    <property type="entry name" value="Sulfatase_C"/>
    <property type="match status" value="1"/>
</dbReference>
<dbReference type="SUPFAM" id="SSF53649">
    <property type="entry name" value="Alkaline phosphatase-like"/>
    <property type="match status" value="1"/>
</dbReference>
<dbReference type="PROSITE" id="PS00523">
    <property type="entry name" value="SULFATASE_1"/>
    <property type="match status" value="1"/>
</dbReference>
<dbReference type="PROSITE" id="PS00149">
    <property type="entry name" value="SULFATASE_2"/>
    <property type="match status" value="1"/>
</dbReference>
<sequence>MKSAPFLFLLGLLGLVTAQTQDPALLDLLRENPDLLSLLLQSNEHRAPLVKPNVVLLVADHMGSGDLTSYGHPTQEAGFIDKMAAEGLRFTNGYVGDAVCTPSRSAIMTGRLPVRIGTFGETRVFLPWTKTGLPKSELTIAEAMKEAGYATGMVGKWHLGINENSSTDGAHLPFNHGFDFVGHNLPFTNSWSCDDTGLHKDFPDSQRCYLYVNATLVSQPYQHKGLTQLFTDDALGFIEDNHADPFFLYVAFAHMHTSLFSSDDFSCTSRRGRYGDNLLEMHDAVQKIVDKLEENNISENTIIFFISDHGPHREYCEEGGDASIFRGGKSHSWEGGHRIPYIVYWPGTISPGISNEIVTSMDIIATAADLGGTTLPTDRIYDGKSIKDVLLEGSASPHSSFFYYCKDNLMAVRVGKYKAHFRTQRVRSQDEYGLECAGGFPLEDYFDCNDCEGDCVTEHDPPLLFDLHRDPGEAYPLEACGHEDVFLTVKSTVEEHKAALVKGTPLLDSFDHSIVPCCNPANGCICNYVHEPGMPECYQDQVATAARHYRP</sequence>
<keyword id="KW-0106">Calcium</keyword>
<keyword id="KW-0963">Cytoplasm</keyword>
<keyword id="KW-0903">Direct protein sequencing</keyword>
<keyword id="KW-0272">Extracellular matrix</keyword>
<keyword id="KW-0325">Glycoprotein</keyword>
<keyword id="KW-0378">Hydrolase</keyword>
<keyword id="KW-0479">Metal-binding</keyword>
<keyword id="KW-0964">Secreted</keyword>
<keyword id="KW-0732">Signal</keyword>
<reference key="1">
    <citation type="journal article" date="1988" name="Eur. J. Biochem.">
        <title>cDNA cloning, nucleotide sequence and expression of the gene for arylsulfatase in the sea urchin (Hemicentrotus pulcherrimus) embryo.</title>
        <authorList>
            <person name="Sasaki H."/>
            <person name="Yamada K."/>
            <person name="Akasaka H."/>
            <person name="Suzuki K."/>
            <person name="Saito A."/>
            <person name="Sato M."/>
            <person name="Shimada H."/>
        </authorList>
    </citation>
    <scope>NUCLEOTIDE SEQUENCE [MRNA]</scope>
    <scope>PARTIAL PROTEIN SEQUENCE</scope>
    <source>
        <tissue>Pluteus</tissue>
    </source>
</reference>
<reference key="2">
    <citation type="journal article" date="1989" name="Eur. J. Biochem.">
        <title>Structure of sea-urchin arylsulfatase gene.</title>
        <authorList>
            <person name="Yamada K."/>
            <person name="Akasaka K."/>
            <person name="Shimada H."/>
        </authorList>
    </citation>
    <scope>NUCLEOTIDE SEQUENCE [MRNA]</scope>
</reference>
<comment type="function">
    <text>May be a structural component of the extracellular matrices involved in cell movement during morphogenesis.</text>
</comment>
<comment type="catalytic activity">
    <reaction>
        <text>an aryl sulfate + H2O = a phenol + sulfate + H(+)</text>
        <dbReference type="Rhea" id="RHEA:17261"/>
        <dbReference type="ChEBI" id="CHEBI:15377"/>
        <dbReference type="ChEBI" id="CHEBI:15378"/>
        <dbReference type="ChEBI" id="CHEBI:16189"/>
        <dbReference type="ChEBI" id="CHEBI:33853"/>
        <dbReference type="ChEBI" id="CHEBI:140317"/>
        <dbReference type="EC" id="3.1.6.1"/>
    </reaction>
</comment>
<comment type="cofactor">
    <cofactor evidence="1">
        <name>Ca(2+)</name>
        <dbReference type="ChEBI" id="CHEBI:29108"/>
    </cofactor>
    <text evidence="1">Binds 1 Ca(2+) ion per subunit.</text>
</comment>
<comment type="subcellular location">
    <subcellularLocation>
        <location>Cytoplasm</location>
    </subcellularLocation>
    <subcellularLocation>
        <location>Secreted</location>
        <location>Extracellular space</location>
        <location>Extracellular matrix</location>
    </subcellularLocation>
</comment>
<comment type="PTM">
    <text evidence="1">The conversion to 3-oxoalanine (also known as C-formylglycine, FGly), of a serine or cysteine residue in prokaryotes and of a cysteine residue in eukaryotes, is critical for catalytic activity.</text>
</comment>
<comment type="similarity">
    <text evidence="4">Belongs to the sulfatase family.</text>
</comment>
<feature type="signal peptide">
    <location>
        <begin position="1"/>
        <end position="20"/>
    </location>
</feature>
<feature type="chain" id="PRO_0000033442" description="Arylsulfatase">
    <location>
        <begin position="21"/>
        <end position="551"/>
    </location>
</feature>
<feature type="active site" description="Nucleophile" evidence="2">
    <location>
        <position position="100"/>
    </location>
</feature>
<feature type="active site" evidence="2">
    <location>
        <position position="158"/>
    </location>
</feature>
<feature type="binding site" evidence="1">
    <location>
        <position position="60"/>
    </location>
    <ligand>
        <name>Ca(2+)</name>
        <dbReference type="ChEBI" id="CHEBI:29108"/>
    </ligand>
</feature>
<feature type="binding site" evidence="1">
    <location>
        <position position="61"/>
    </location>
    <ligand>
        <name>Ca(2+)</name>
        <dbReference type="ChEBI" id="CHEBI:29108"/>
    </ligand>
</feature>
<feature type="binding site" description="via 3-oxoalanine" evidence="1">
    <location>
        <position position="100"/>
    </location>
    <ligand>
        <name>Ca(2+)</name>
        <dbReference type="ChEBI" id="CHEBI:29108"/>
    </ligand>
</feature>
<feature type="binding site" evidence="1">
    <location>
        <position position="308"/>
    </location>
    <ligand>
        <name>Ca(2+)</name>
        <dbReference type="ChEBI" id="CHEBI:29108"/>
    </ligand>
</feature>
<feature type="binding site" evidence="1">
    <location>
        <position position="309"/>
    </location>
    <ligand>
        <name>Ca(2+)</name>
        <dbReference type="ChEBI" id="CHEBI:29108"/>
    </ligand>
</feature>
<feature type="modified residue" description="Blocked amino end (Gln)">
    <location>
        <position position="21"/>
    </location>
</feature>
<feature type="modified residue" description="3-oxoalanine (Cys)" evidence="2">
    <location>
        <position position="100"/>
    </location>
</feature>
<feature type="glycosylation site" description="N-linked (GlcNAc...) asparagine" evidence="3">
    <location>
        <position position="164"/>
    </location>
</feature>
<feature type="glycosylation site" description="N-linked (GlcNAc...) asparagine" evidence="3">
    <location>
        <position position="213"/>
    </location>
</feature>
<feature type="glycosylation site" description="N-linked (GlcNAc...) asparagine" evidence="3">
    <location>
        <position position="296"/>
    </location>
</feature>
<proteinExistence type="evidence at protein level"/>